<name>RL15_RALN1</name>
<dbReference type="EMBL" id="AL646052">
    <property type="protein sequence ID" value="CAD16709.1"/>
    <property type="molecule type" value="Genomic_DNA"/>
</dbReference>
<dbReference type="RefSeq" id="WP_011002904.1">
    <property type="nucleotide sequence ID" value="NC_003295.1"/>
</dbReference>
<dbReference type="SMR" id="Q8XV31"/>
<dbReference type="STRING" id="267608.RSc3000"/>
<dbReference type="EnsemblBacteria" id="CAD16709">
    <property type="protein sequence ID" value="CAD16709"/>
    <property type="gene ID" value="RSc3000"/>
</dbReference>
<dbReference type="KEGG" id="rso:RSc3000"/>
<dbReference type="eggNOG" id="COG0200">
    <property type="taxonomic scope" value="Bacteria"/>
</dbReference>
<dbReference type="HOGENOM" id="CLU_055188_4_2_4"/>
<dbReference type="Proteomes" id="UP000001436">
    <property type="component" value="Chromosome"/>
</dbReference>
<dbReference type="GO" id="GO:0022625">
    <property type="term" value="C:cytosolic large ribosomal subunit"/>
    <property type="evidence" value="ECO:0007669"/>
    <property type="project" value="TreeGrafter"/>
</dbReference>
<dbReference type="GO" id="GO:0019843">
    <property type="term" value="F:rRNA binding"/>
    <property type="evidence" value="ECO:0007669"/>
    <property type="project" value="UniProtKB-UniRule"/>
</dbReference>
<dbReference type="GO" id="GO:0003735">
    <property type="term" value="F:structural constituent of ribosome"/>
    <property type="evidence" value="ECO:0007669"/>
    <property type="project" value="InterPro"/>
</dbReference>
<dbReference type="GO" id="GO:0006412">
    <property type="term" value="P:translation"/>
    <property type="evidence" value="ECO:0007669"/>
    <property type="project" value="UniProtKB-UniRule"/>
</dbReference>
<dbReference type="Gene3D" id="3.100.10.10">
    <property type="match status" value="1"/>
</dbReference>
<dbReference type="HAMAP" id="MF_01341">
    <property type="entry name" value="Ribosomal_uL15"/>
    <property type="match status" value="1"/>
</dbReference>
<dbReference type="InterPro" id="IPR030878">
    <property type="entry name" value="Ribosomal_uL15"/>
</dbReference>
<dbReference type="InterPro" id="IPR021131">
    <property type="entry name" value="Ribosomal_uL15/eL18"/>
</dbReference>
<dbReference type="InterPro" id="IPR036227">
    <property type="entry name" value="Ribosomal_uL15/eL18_sf"/>
</dbReference>
<dbReference type="InterPro" id="IPR005749">
    <property type="entry name" value="Ribosomal_uL15_bac-type"/>
</dbReference>
<dbReference type="InterPro" id="IPR001196">
    <property type="entry name" value="Ribosomal_uL15_CS"/>
</dbReference>
<dbReference type="NCBIfam" id="TIGR01071">
    <property type="entry name" value="rplO_bact"/>
    <property type="match status" value="1"/>
</dbReference>
<dbReference type="PANTHER" id="PTHR12934">
    <property type="entry name" value="50S RIBOSOMAL PROTEIN L15"/>
    <property type="match status" value="1"/>
</dbReference>
<dbReference type="PANTHER" id="PTHR12934:SF11">
    <property type="entry name" value="LARGE RIBOSOMAL SUBUNIT PROTEIN UL15M"/>
    <property type="match status" value="1"/>
</dbReference>
<dbReference type="Pfam" id="PF00828">
    <property type="entry name" value="Ribosomal_L27A"/>
    <property type="match status" value="1"/>
</dbReference>
<dbReference type="SUPFAM" id="SSF52080">
    <property type="entry name" value="Ribosomal proteins L15p and L18e"/>
    <property type="match status" value="1"/>
</dbReference>
<dbReference type="PROSITE" id="PS00475">
    <property type="entry name" value="RIBOSOMAL_L15"/>
    <property type="match status" value="1"/>
</dbReference>
<feature type="chain" id="PRO_0000104790" description="Large ribosomal subunit protein uL15">
    <location>
        <begin position="1"/>
        <end position="143"/>
    </location>
</feature>
<feature type="region of interest" description="Disordered" evidence="2">
    <location>
        <begin position="1"/>
        <end position="57"/>
    </location>
</feature>
<feature type="compositionally biased region" description="Gly residues" evidence="2">
    <location>
        <begin position="21"/>
        <end position="31"/>
    </location>
</feature>
<protein>
    <recommendedName>
        <fullName evidence="1">Large ribosomal subunit protein uL15</fullName>
    </recommendedName>
    <alternativeName>
        <fullName evidence="3">50S ribosomal protein L15</fullName>
    </alternativeName>
</protein>
<organism>
    <name type="scientific">Ralstonia nicotianae (strain ATCC BAA-1114 / GMI1000)</name>
    <name type="common">Ralstonia solanacearum</name>
    <dbReference type="NCBI Taxonomy" id="267608"/>
    <lineage>
        <taxon>Bacteria</taxon>
        <taxon>Pseudomonadati</taxon>
        <taxon>Pseudomonadota</taxon>
        <taxon>Betaproteobacteria</taxon>
        <taxon>Burkholderiales</taxon>
        <taxon>Burkholderiaceae</taxon>
        <taxon>Ralstonia</taxon>
        <taxon>Ralstonia solanacearum species complex</taxon>
    </lineage>
</organism>
<evidence type="ECO:0000255" key="1">
    <source>
        <dbReference type="HAMAP-Rule" id="MF_01341"/>
    </source>
</evidence>
<evidence type="ECO:0000256" key="2">
    <source>
        <dbReference type="SAM" id="MobiDB-lite"/>
    </source>
</evidence>
<evidence type="ECO:0000305" key="3"/>
<comment type="function">
    <text evidence="1">Binds to the 23S rRNA.</text>
</comment>
<comment type="subunit">
    <text evidence="1">Part of the 50S ribosomal subunit.</text>
</comment>
<comment type="similarity">
    <text evidence="1">Belongs to the universal ribosomal protein uL15 family.</text>
</comment>
<proteinExistence type="inferred from homology"/>
<reference key="1">
    <citation type="journal article" date="2002" name="Nature">
        <title>Genome sequence of the plant pathogen Ralstonia solanacearum.</title>
        <authorList>
            <person name="Salanoubat M."/>
            <person name="Genin S."/>
            <person name="Artiguenave F."/>
            <person name="Gouzy J."/>
            <person name="Mangenot S."/>
            <person name="Arlat M."/>
            <person name="Billault A."/>
            <person name="Brottier P."/>
            <person name="Camus J.-C."/>
            <person name="Cattolico L."/>
            <person name="Chandler M."/>
            <person name="Choisne N."/>
            <person name="Claudel-Renard C."/>
            <person name="Cunnac S."/>
            <person name="Demange N."/>
            <person name="Gaspin C."/>
            <person name="Lavie M."/>
            <person name="Moisan A."/>
            <person name="Robert C."/>
            <person name="Saurin W."/>
            <person name="Schiex T."/>
            <person name="Siguier P."/>
            <person name="Thebault P."/>
            <person name="Whalen M."/>
            <person name="Wincker P."/>
            <person name="Levy M."/>
            <person name="Weissenbach J."/>
            <person name="Boucher C.A."/>
        </authorList>
    </citation>
    <scope>NUCLEOTIDE SEQUENCE [LARGE SCALE GENOMIC DNA]</scope>
    <source>
        <strain>ATCC BAA-1114 / GMI1000</strain>
    </source>
</reference>
<keyword id="KW-1185">Reference proteome</keyword>
<keyword id="KW-0687">Ribonucleoprotein</keyword>
<keyword id="KW-0689">Ribosomal protein</keyword>
<keyword id="KW-0694">RNA-binding</keyword>
<keyword id="KW-0699">rRNA-binding</keyword>
<sequence length="143" mass="14645">MQLNNLKPAAGSKHAKRRVGRGIGSGLGKTAGRGHKGQKSRSGGFHKVGFEGGQMPLHRRLPKRGFTSLTKEFTAEVRLGDLAGLPVAEIDLLTLKQAGLVGELVKSAKVILSGSIDKKVTLKGLGATAGAKAAIEAAGGSLA</sequence>
<gene>
    <name evidence="1" type="primary">rplO</name>
    <name type="ordered locus">RSc3000</name>
    <name type="ORF">RS01090</name>
</gene>
<accession>Q8XV31</accession>